<evidence type="ECO:0000255" key="1">
    <source>
        <dbReference type="HAMAP-Rule" id="MF_00530"/>
    </source>
</evidence>
<dbReference type="EMBL" id="CP000238">
    <property type="protein sequence ID" value="ABF14124.1"/>
    <property type="molecule type" value="Genomic_DNA"/>
</dbReference>
<dbReference type="RefSeq" id="WP_011520342.1">
    <property type="nucleotide sequence ID" value="NC_007984.1"/>
</dbReference>
<dbReference type="SMR" id="Q1LTV5"/>
<dbReference type="STRING" id="374463.BCI_0140"/>
<dbReference type="KEGG" id="bci:BCI_0140"/>
<dbReference type="HOGENOM" id="CLU_084338_2_0_6"/>
<dbReference type="OrthoDB" id="9791445at2"/>
<dbReference type="Proteomes" id="UP000002427">
    <property type="component" value="Chromosome"/>
</dbReference>
<dbReference type="GO" id="GO:0005886">
    <property type="term" value="C:plasma membrane"/>
    <property type="evidence" value="ECO:0007669"/>
    <property type="project" value="UniProtKB-SubCell"/>
</dbReference>
<dbReference type="GO" id="GO:0045259">
    <property type="term" value="C:proton-transporting ATP synthase complex"/>
    <property type="evidence" value="ECO:0007669"/>
    <property type="project" value="UniProtKB-KW"/>
</dbReference>
<dbReference type="GO" id="GO:0005524">
    <property type="term" value="F:ATP binding"/>
    <property type="evidence" value="ECO:0007669"/>
    <property type="project" value="UniProtKB-UniRule"/>
</dbReference>
<dbReference type="GO" id="GO:0046933">
    <property type="term" value="F:proton-transporting ATP synthase activity, rotational mechanism"/>
    <property type="evidence" value="ECO:0007669"/>
    <property type="project" value="UniProtKB-UniRule"/>
</dbReference>
<dbReference type="CDD" id="cd12152">
    <property type="entry name" value="F1-ATPase_delta"/>
    <property type="match status" value="1"/>
</dbReference>
<dbReference type="FunFam" id="1.20.5.440:FF:000001">
    <property type="entry name" value="ATP synthase epsilon chain"/>
    <property type="match status" value="1"/>
</dbReference>
<dbReference type="FunFam" id="2.60.15.10:FF:000001">
    <property type="entry name" value="ATP synthase epsilon chain"/>
    <property type="match status" value="1"/>
</dbReference>
<dbReference type="Gene3D" id="1.20.5.440">
    <property type="entry name" value="ATP synthase delta/epsilon subunit, C-terminal domain"/>
    <property type="match status" value="1"/>
</dbReference>
<dbReference type="Gene3D" id="2.60.15.10">
    <property type="entry name" value="F0F1 ATP synthase delta/epsilon subunit, N-terminal"/>
    <property type="match status" value="1"/>
</dbReference>
<dbReference type="HAMAP" id="MF_00530">
    <property type="entry name" value="ATP_synth_epsil_bac"/>
    <property type="match status" value="1"/>
</dbReference>
<dbReference type="InterPro" id="IPR036794">
    <property type="entry name" value="ATP_F1_dsu/esu_C_sf"/>
</dbReference>
<dbReference type="InterPro" id="IPR001469">
    <property type="entry name" value="ATP_synth_F1_dsu/esu"/>
</dbReference>
<dbReference type="InterPro" id="IPR020546">
    <property type="entry name" value="ATP_synth_F1_dsu/esu_N"/>
</dbReference>
<dbReference type="InterPro" id="IPR020547">
    <property type="entry name" value="ATP_synth_F1_esu_C"/>
</dbReference>
<dbReference type="InterPro" id="IPR036771">
    <property type="entry name" value="ATPsynth_dsu/esu_N"/>
</dbReference>
<dbReference type="NCBIfam" id="TIGR01216">
    <property type="entry name" value="ATP_synt_epsi"/>
    <property type="match status" value="1"/>
</dbReference>
<dbReference type="NCBIfam" id="NF001847">
    <property type="entry name" value="PRK00571.1-4"/>
    <property type="match status" value="1"/>
</dbReference>
<dbReference type="PANTHER" id="PTHR13822">
    <property type="entry name" value="ATP SYNTHASE DELTA/EPSILON CHAIN"/>
    <property type="match status" value="1"/>
</dbReference>
<dbReference type="PANTHER" id="PTHR13822:SF10">
    <property type="entry name" value="ATP SYNTHASE EPSILON CHAIN, CHLOROPLASTIC"/>
    <property type="match status" value="1"/>
</dbReference>
<dbReference type="Pfam" id="PF00401">
    <property type="entry name" value="ATP-synt_DE"/>
    <property type="match status" value="1"/>
</dbReference>
<dbReference type="Pfam" id="PF02823">
    <property type="entry name" value="ATP-synt_DE_N"/>
    <property type="match status" value="1"/>
</dbReference>
<dbReference type="SUPFAM" id="SSF46604">
    <property type="entry name" value="Epsilon subunit of F1F0-ATP synthase C-terminal domain"/>
    <property type="match status" value="1"/>
</dbReference>
<dbReference type="SUPFAM" id="SSF51344">
    <property type="entry name" value="Epsilon subunit of F1F0-ATP synthase N-terminal domain"/>
    <property type="match status" value="1"/>
</dbReference>
<comment type="function">
    <text evidence="1">Produces ATP from ADP in the presence of a proton gradient across the membrane.</text>
</comment>
<comment type="subunit">
    <text>F-type ATPases have 2 components, CF(1) - the catalytic core - and CF(0) - the membrane proton channel. CF(1) has five subunits: alpha(3), beta(3), gamma(1), delta(1), epsilon(1). CF(0) has three main subunits: a, b and c.</text>
</comment>
<comment type="subcellular location">
    <subcellularLocation>
        <location evidence="1">Cell membrane</location>
        <topology evidence="1">Peripheral membrane protein</topology>
    </subcellularLocation>
</comment>
<comment type="similarity">
    <text evidence="1">Belongs to the ATPase epsilon chain family.</text>
</comment>
<protein>
    <recommendedName>
        <fullName evidence="1">ATP synthase epsilon chain</fullName>
    </recommendedName>
    <alternativeName>
        <fullName evidence="1">ATP synthase F1 sector epsilon subunit</fullName>
    </alternativeName>
    <alternativeName>
        <fullName evidence="1">F-ATPase epsilon subunit</fullName>
    </alternativeName>
</protein>
<keyword id="KW-0066">ATP synthesis</keyword>
<keyword id="KW-1003">Cell membrane</keyword>
<keyword id="KW-0139">CF(1)</keyword>
<keyword id="KW-0375">Hydrogen ion transport</keyword>
<keyword id="KW-0406">Ion transport</keyword>
<keyword id="KW-0472">Membrane</keyword>
<keyword id="KW-1185">Reference proteome</keyword>
<keyword id="KW-0813">Transport</keyword>
<reference key="1">
    <citation type="journal article" date="2006" name="PLoS Biol.">
        <title>Metabolic complementarity and genomics of the dual bacterial symbiosis of sharpshooters.</title>
        <authorList>
            <person name="Wu D."/>
            <person name="Daugherty S.C."/>
            <person name="Van Aken S.E."/>
            <person name="Pai G.H."/>
            <person name="Watkins K.L."/>
            <person name="Khouri H."/>
            <person name="Tallon L.J."/>
            <person name="Zaborsky J.M."/>
            <person name="Dunbar H.E."/>
            <person name="Tran P.L."/>
            <person name="Moran N.A."/>
            <person name="Eisen J.A."/>
        </authorList>
    </citation>
    <scope>NUCLEOTIDE SEQUENCE [LARGE SCALE GENOMIC DNA]</scope>
</reference>
<organism>
    <name type="scientific">Baumannia cicadellinicola subsp. Homalodisca coagulata</name>
    <dbReference type="NCBI Taxonomy" id="374463"/>
    <lineage>
        <taxon>Bacteria</taxon>
        <taxon>Pseudomonadati</taxon>
        <taxon>Pseudomonadota</taxon>
        <taxon>Gammaproteobacteria</taxon>
        <taxon>Candidatus Palibaumannia</taxon>
    </lineage>
</organism>
<gene>
    <name evidence="1" type="primary">atpC</name>
    <name type="ordered locus">BCI_0140</name>
</gene>
<accession>Q1LTV5</accession>
<sequence>MTIKTYHLYVVSAEKQIFSGLVEKIQVTGIEGDLGIFPRHTPLLTQIKPGLIYLVTEDGKTEYIYISGGILEVQLNIVTVLADTAIRGEDLDEKRAINSKLQAQENIKNLNYDMSYTQASVELAKALAKLRVIKLIKKAI</sequence>
<name>ATPE_BAUCH</name>
<feature type="chain" id="PRO_0000265786" description="ATP synthase epsilon chain">
    <location>
        <begin position="1"/>
        <end position="140"/>
    </location>
</feature>
<proteinExistence type="inferred from homology"/>